<accession>Q0BI25</accession>
<dbReference type="EMBL" id="CP000440">
    <property type="protein sequence ID" value="ABI86198.1"/>
    <property type="molecule type" value="Genomic_DNA"/>
</dbReference>
<dbReference type="RefSeq" id="WP_011656033.1">
    <property type="nucleotide sequence ID" value="NZ_CP009798.1"/>
</dbReference>
<dbReference type="SMR" id="Q0BI25"/>
<dbReference type="GeneID" id="93083949"/>
<dbReference type="KEGG" id="bam:Bamb_0639"/>
<dbReference type="PATRIC" id="fig|339670.21.peg.957"/>
<dbReference type="eggNOG" id="COG1420">
    <property type="taxonomic scope" value="Bacteria"/>
</dbReference>
<dbReference type="Proteomes" id="UP000000662">
    <property type="component" value="Chromosome 1"/>
</dbReference>
<dbReference type="GO" id="GO:0003677">
    <property type="term" value="F:DNA binding"/>
    <property type="evidence" value="ECO:0007669"/>
    <property type="project" value="InterPro"/>
</dbReference>
<dbReference type="GO" id="GO:0045892">
    <property type="term" value="P:negative regulation of DNA-templated transcription"/>
    <property type="evidence" value="ECO:0007669"/>
    <property type="project" value="UniProtKB-UniRule"/>
</dbReference>
<dbReference type="Gene3D" id="3.30.450.40">
    <property type="match status" value="1"/>
</dbReference>
<dbReference type="Gene3D" id="3.30.390.60">
    <property type="entry name" value="Heat-inducible transcription repressor hrca homolog, domain 3"/>
    <property type="match status" value="1"/>
</dbReference>
<dbReference type="Gene3D" id="1.10.10.10">
    <property type="entry name" value="Winged helix-like DNA-binding domain superfamily/Winged helix DNA-binding domain"/>
    <property type="match status" value="1"/>
</dbReference>
<dbReference type="HAMAP" id="MF_00081">
    <property type="entry name" value="HrcA"/>
    <property type="match status" value="1"/>
</dbReference>
<dbReference type="InterPro" id="IPR029016">
    <property type="entry name" value="GAF-like_dom_sf"/>
</dbReference>
<dbReference type="InterPro" id="IPR002571">
    <property type="entry name" value="HrcA"/>
</dbReference>
<dbReference type="InterPro" id="IPR021153">
    <property type="entry name" value="HrcA_C"/>
</dbReference>
<dbReference type="InterPro" id="IPR036388">
    <property type="entry name" value="WH-like_DNA-bd_sf"/>
</dbReference>
<dbReference type="InterPro" id="IPR036390">
    <property type="entry name" value="WH_DNA-bd_sf"/>
</dbReference>
<dbReference type="InterPro" id="IPR005104">
    <property type="entry name" value="WHTH_HrcA_DNA-bd"/>
</dbReference>
<dbReference type="InterPro" id="IPR023120">
    <property type="entry name" value="WHTH_transcript_rep_HrcA_IDD"/>
</dbReference>
<dbReference type="NCBIfam" id="TIGR00331">
    <property type="entry name" value="hrcA"/>
    <property type="match status" value="1"/>
</dbReference>
<dbReference type="PANTHER" id="PTHR34824">
    <property type="entry name" value="HEAT-INDUCIBLE TRANSCRIPTION REPRESSOR HRCA"/>
    <property type="match status" value="1"/>
</dbReference>
<dbReference type="PANTHER" id="PTHR34824:SF1">
    <property type="entry name" value="HEAT-INDUCIBLE TRANSCRIPTION REPRESSOR HRCA"/>
    <property type="match status" value="1"/>
</dbReference>
<dbReference type="Pfam" id="PF01628">
    <property type="entry name" value="HrcA"/>
    <property type="match status" value="1"/>
</dbReference>
<dbReference type="Pfam" id="PF03444">
    <property type="entry name" value="HrcA_DNA-bdg"/>
    <property type="match status" value="1"/>
</dbReference>
<dbReference type="PIRSF" id="PIRSF005485">
    <property type="entry name" value="HrcA"/>
    <property type="match status" value="1"/>
</dbReference>
<dbReference type="SUPFAM" id="SSF55781">
    <property type="entry name" value="GAF domain-like"/>
    <property type="match status" value="1"/>
</dbReference>
<dbReference type="SUPFAM" id="SSF46785">
    <property type="entry name" value="Winged helix' DNA-binding domain"/>
    <property type="match status" value="1"/>
</dbReference>
<sequence>MLDPRARTLLKTLIERYIADGQPVGSRTLSRYSGLELSPATIRNVMSDLEELGLVSSPHTSAGRVPTPRGYRLFVDTMLTVETPIDAEAVARQVQHTLQAGEPQQRVVAAAASVLSNLSQFAGVVLTPRRSHVFKQIEFMRLSDKRILLIIVTPEGDVQNRMLATPRDYSPSQLTEASNYINAHFAGLSFDEVRRRLRDEIDQLRGDMTTLMHAAVTASTEVPDTEDTVLISGERNLLEVADLSSDMARLRKLFDVFDQKTGLLQLLDVSSHAQGVQIFIGGESTLVPIEEMSVVTAPYEVNGQIVGTLGVIGPTRMAYNRVIPIVDITARLLSLTLSQQ</sequence>
<organism>
    <name type="scientific">Burkholderia ambifaria (strain ATCC BAA-244 / DSM 16087 / CCUG 44356 / LMG 19182 / AMMD)</name>
    <name type="common">Burkholderia cepacia (strain AMMD)</name>
    <dbReference type="NCBI Taxonomy" id="339670"/>
    <lineage>
        <taxon>Bacteria</taxon>
        <taxon>Pseudomonadati</taxon>
        <taxon>Pseudomonadota</taxon>
        <taxon>Betaproteobacteria</taxon>
        <taxon>Burkholderiales</taxon>
        <taxon>Burkholderiaceae</taxon>
        <taxon>Burkholderia</taxon>
        <taxon>Burkholderia cepacia complex</taxon>
    </lineage>
</organism>
<evidence type="ECO:0000255" key="1">
    <source>
        <dbReference type="HAMAP-Rule" id="MF_00081"/>
    </source>
</evidence>
<gene>
    <name evidence="1" type="primary">hrcA</name>
    <name type="ordered locus">Bamb_0639</name>
</gene>
<feature type="chain" id="PRO_1000010384" description="Heat-inducible transcription repressor HrcA">
    <location>
        <begin position="1"/>
        <end position="340"/>
    </location>
</feature>
<proteinExistence type="inferred from homology"/>
<keyword id="KW-0678">Repressor</keyword>
<keyword id="KW-0346">Stress response</keyword>
<keyword id="KW-0804">Transcription</keyword>
<keyword id="KW-0805">Transcription regulation</keyword>
<protein>
    <recommendedName>
        <fullName evidence="1">Heat-inducible transcription repressor HrcA</fullName>
    </recommendedName>
</protein>
<comment type="function">
    <text evidence="1">Negative regulator of class I heat shock genes (grpE-dnaK-dnaJ and groELS operons). Prevents heat-shock induction of these operons.</text>
</comment>
<comment type="similarity">
    <text evidence="1">Belongs to the HrcA family.</text>
</comment>
<reference key="1">
    <citation type="submission" date="2006-08" db="EMBL/GenBank/DDBJ databases">
        <title>Complete sequence of chromosome 1 of Burkholderia cepacia AMMD.</title>
        <authorList>
            <person name="Copeland A."/>
            <person name="Lucas S."/>
            <person name="Lapidus A."/>
            <person name="Barry K."/>
            <person name="Detter J.C."/>
            <person name="Glavina del Rio T."/>
            <person name="Hammon N."/>
            <person name="Israni S."/>
            <person name="Pitluck S."/>
            <person name="Bruce D."/>
            <person name="Chain P."/>
            <person name="Malfatti S."/>
            <person name="Shin M."/>
            <person name="Vergez L."/>
            <person name="Schmutz J."/>
            <person name="Larimer F."/>
            <person name="Land M."/>
            <person name="Hauser L."/>
            <person name="Kyrpides N."/>
            <person name="Kim E."/>
            <person name="Parke J."/>
            <person name="Coenye T."/>
            <person name="Konstantinidis K."/>
            <person name="Ramette A."/>
            <person name="Tiedje J."/>
            <person name="Richardson P."/>
        </authorList>
    </citation>
    <scope>NUCLEOTIDE SEQUENCE [LARGE SCALE GENOMIC DNA]</scope>
    <source>
        <strain>ATCC BAA-244 / DSM 16087 / CCUG 44356 / LMG 19182 / AMMD</strain>
    </source>
</reference>
<name>HRCA_BURCM</name>